<sequence length="91" mass="10953">MSRTIFCTFLQREAEGQDFQLYPGELGKRIYNEISKEAWAQWQHKQTMLINEKKLNMMNAEHRKLLEQEMVNFLFEGKEVHIEGYTPEDKK</sequence>
<feature type="chain" id="PRO_1000131843" description="Probable Fe(2+)-trafficking protein">
    <location>
        <begin position="1"/>
        <end position="91"/>
    </location>
</feature>
<keyword id="KW-0408">Iron</keyword>
<proteinExistence type="inferred from homology"/>
<comment type="function">
    <text evidence="1">Could be a mediator in iron transactions between iron acquisition and iron-requiring processes, such as synthesis and/or repair of Fe-S clusters in biosynthetic enzymes.</text>
</comment>
<comment type="subunit">
    <text evidence="1">Monomer.</text>
</comment>
<comment type="similarity">
    <text evidence="1">Belongs to the Fe(2+)-trafficking protein family.</text>
</comment>
<accession>B1XFC2</accession>
<protein>
    <recommendedName>
        <fullName evidence="1">Probable Fe(2+)-trafficking protein</fullName>
    </recommendedName>
</protein>
<organism>
    <name type="scientific">Escherichia coli (strain K12 / DH10B)</name>
    <dbReference type="NCBI Taxonomy" id="316385"/>
    <lineage>
        <taxon>Bacteria</taxon>
        <taxon>Pseudomonadati</taxon>
        <taxon>Pseudomonadota</taxon>
        <taxon>Gammaproteobacteria</taxon>
        <taxon>Enterobacterales</taxon>
        <taxon>Enterobacteriaceae</taxon>
        <taxon>Escherichia</taxon>
    </lineage>
</organism>
<dbReference type="EMBL" id="CP000948">
    <property type="protein sequence ID" value="ACB04056.1"/>
    <property type="molecule type" value="Genomic_DNA"/>
</dbReference>
<dbReference type="RefSeq" id="WP_000091700.1">
    <property type="nucleotide sequence ID" value="NC_010473.1"/>
</dbReference>
<dbReference type="BMRB" id="B1XFC2"/>
<dbReference type="SMR" id="B1XFC2"/>
<dbReference type="KEGG" id="ecd:ECDH10B_3137"/>
<dbReference type="HOGENOM" id="CLU_170994_0_0_6"/>
<dbReference type="GO" id="GO:0005829">
    <property type="term" value="C:cytosol"/>
    <property type="evidence" value="ECO:0007669"/>
    <property type="project" value="TreeGrafter"/>
</dbReference>
<dbReference type="GO" id="GO:0005506">
    <property type="term" value="F:iron ion binding"/>
    <property type="evidence" value="ECO:0007669"/>
    <property type="project" value="UniProtKB-UniRule"/>
</dbReference>
<dbReference type="GO" id="GO:0034599">
    <property type="term" value="P:cellular response to oxidative stress"/>
    <property type="evidence" value="ECO:0007669"/>
    <property type="project" value="TreeGrafter"/>
</dbReference>
<dbReference type="FunFam" id="1.10.3880.10:FF:000001">
    <property type="entry name" value="Probable Fe(2+)-trafficking protein"/>
    <property type="match status" value="1"/>
</dbReference>
<dbReference type="Gene3D" id="1.10.3880.10">
    <property type="entry name" value="Fe(II) trafficking protein YggX"/>
    <property type="match status" value="1"/>
</dbReference>
<dbReference type="HAMAP" id="MF_00686">
    <property type="entry name" value="Fe_traffic_YggX"/>
    <property type="match status" value="1"/>
</dbReference>
<dbReference type="InterPro" id="IPR007457">
    <property type="entry name" value="Fe_traffick_prot_YggX"/>
</dbReference>
<dbReference type="InterPro" id="IPR036766">
    <property type="entry name" value="Fe_traffick_prot_YggX_sf"/>
</dbReference>
<dbReference type="NCBIfam" id="NF003817">
    <property type="entry name" value="PRK05408.1"/>
    <property type="match status" value="1"/>
</dbReference>
<dbReference type="PANTHER" id="PTHR36965">
    <property type="entry name" value="FE(2+)-TRAFFICKING PROTEIN-RELATED"/>
    <property type="match status" value="1"/>
</dbReference>
<dbReference type="PANTHER" id="PTHR36965:SF1">
    <property type="entry name" value="FE(2+)-TRAFFICKING PROTEIN-RELATED"/>
    <property type="match status" value="1"/>
</dbReference>
<dbReference type="Pfam" id="PF04362">
    <property type="entry name" value="Iron_traffic"/>
    <property type="match status" value="1"/>
</dbReference>
<dbReference type="PIRSF" id="PIRSF029827">
    <property type="entry name" value="Fe_traffic_YggX"/>
    <property type="match status" value="1"/>
</dbReference>
<dbReference type="SUPFAM" id="SSF111148">
    <property type="entry name" value="YggX-like"/>
    <property type="match status" value="1"/>
</dbReference>
<evidence type="ECO:0000255" key="1">
    <source>
        <dbReference type="HAMAP-Rule" id="MF_00686"/>
    </source>
</evidence>
<gene>
    <name evidence="1" type="primary">yggX</name>
    <name type="ordered locus">ECDH10B_3137</name>
</gene>
<reference key="1">
    <citation type="journal article" date="2008" name="J. Bacteriol.">
        <title>The complete genome sequence of Escherichia coli DH10B: insights into the biology of a laboratory workhorse.</title>
        <authorList>
            <person name="Durfee T."/>
            <person name="Nelson R."/>
            <person name="Baldwin S."/>
            <person name="Plunkett G. III"/>
            <person name="Burland V."/>
            <person name="Mau B."/>
            <person name="Petrosino J.F."/>
            <person name="Qin X."/>
            <person name="Muzny D.M."/>
            <person name="Ayele M."/>
            <person name="Gibbs R.A."/>
            <person name="Csorgo B."/>
            <person name="Posfai G."/>
            <person name="Weinstock G.M."/>
            <person name="Blattner F.R."/>
        </authorList>
    </citation>
    <scope>NUCLEOTIDE SEQUENCE [LARGE SCALE GENOMIC DNA]</scope>
    <source>
        <strain>K12 / DH10B</strain>
    </source>
</reference>
<name>FETP_ECODH</name>